<reference key="1">
    <citation type="submission" date="2006-10" db="EMBL/GenBank/DDBJ databases">
        <authorList>
            <consortium name="NIH - Mammalian Gene Collection (MGC) project"/>
        </authorList>
    </citation>
    <scope>NUCLEOTIDE SEQUENCE [LARGE SCALE MRNA]</scope>
    <source>
        <strain>Hereford</strain>
        <tissue>Hippocampus</tissue>
    </source>
</reference>
<reference key="2">
    <citation type="journal article" date="2002" name="J. Cell Biol.">
        <title>Autotaxin has lysophospholipase D activity leading to tumor cell growth and motility by lysophosphatidic acid production.</title>
        <authorList>
            <person name="Umezu-Goto M."/>
            <person name="Kishi Y."/>
            <person name="Taira A."/>
            <person name="Hama K."/>
            <person name="Dohmae N."/>
            <person name="Takio K."/>
            <person name="Yamori T."/>
            <person name="Mills G.B."/>
            <person name="Inoue K."/>
            <person name="Aoki J."/>
            <person name="Arai H."/>
        </authorList>
    </citation>
    <scope>PROTEIN SEQUENCE OF 250-266; 749-777 AND 847-866</scope>
    <scope>CATALYTIC ACTIVITY</scope>
    <scope>FUNCTION</scope>
    <scope>SUBCELLULAR LOCATION</scope>
    <scope>TISSUE SPECIFICITY</scope>
    <source>
        <tissue>Fetal blood</tissue>
    </source>
</reference>
<feature type="signal peptide" evidence="2">
    <location>
        <begin position="1"/>
        <end position="27"/>
    </location>
</feature>
<feature type="propeptide" id="PRO_0000281647" description="Removed by furin" evidence="2">
    <location>
        <begin position="28"/>
        <end position="35"/>
    </location>
</feature>
<feature type="chain" id="PRO_0000281648" description="Autotaxin">
    <location>
        <begin position="36"/>
        <end position="888"/>
    </location>
</feature>
<feature type="domain" description="SMB 1" evidence="5">
    <location>
        <begin position="55"/>
        <end position="98"/>
    </location>
</feature>
<feature type="domain" description="SMB 2" evidence="5">
    <location>
        <begin position="99"/>
        <end position="143"/>
    </location>
</feature>
<feature type="region of interest" description="Phosphodiesterase" evidence="3">
    <location>
        <begin position="145"/>
        <end position="502"/>
    </location>
</feature>
<feature type="region of interest" description="Nuclease-like domain" evidence="3">
    <location>
        <begin position="623"/>
        <end position="888"/>
    </location>
</feature>
<feature type="region of interest" description="Required for secretion" evidence="3">
    <location>
        <begin position="855"/>
        <end position="876"/>
    </location>
</feature>
<feature type="short sequence motif" description="Cell attachment site" evidence="4">
    <location>
        <begin position="127"/>
        <end position="129"/>
    </location>
</feature>
<feature type="active site" description="Nucleophile" evidence="3">
    <location>
        <position position="210"/>
    </location>
</feature>
<feature type="binding site" evidence="1">
    <location>
        <position position="172"/>
    </location>
    <ligand>
        <name>Zn(2+)</name>
        <dbReference type="ChEBI" id="CHEBI:29105"/>
        <label>1</label>
        <note>catalytic</note>
    </ligand>
</feature>
<feature type="binding site" evidence="3">
    <location>
        <position position="210"/>
    </location>
    <ligand>
        <name>1-(9Z-octadecenoyl)-sn-glycero-3-phosphate</name>
        <dbReference type="ChEBI" id="CHEBI:74544"/>
    </ligand>
</feature>
<feature type="binding site" evidence="3">
    <location>
        <position position="210"/>
    </location>
    <ligand>
        <name>1-hexadecanoyl-sn-glycero-3-phosphate</name>
        <dbReference type="ChEBI" id="CHEBI:57518"/>
    </ligand>
</feature>
<feature type="binding site" evidence="3">
    <location>
        <position position="210"/>
    </location>
    <ligand>
        <name>1-tetradecanoyl-sn-glycerol 3-phosphate</name>
        <dbReference type="ChEBI" id="CHEBI:72683"/>
    </ligand>
</feature>
<feature type="binding site" evidence="1">
    <location>
        <position position="210"/>
    </location>
    <ligand>
        <name>Zn(2+)</name>
        <dbReference type="ChEBI" id="CHEBI:29105"/>
        <label>1</label>
        <note>catalytic</note>
    </ligand>
</feature>
<feature type="binding site" evidence="3">
    <location>
        <position position="231"/>
    </location>
    <ligand>
        <name>1-(9Z-octadecenoyl)-sn-glycero-3-phosphate</name>
        <dbReference type="ChEBI" id="CHEBI:74544"/>
    </ligand>
</feature>
<feature type="binding site" evidence="3">
    <location>
        <position position="231"/>
    </location>
    <ligand>
        <name>1-hexadecanoyl-sn-glycero-3-phosphate</name>
        <dbReference type="ChEBI" id="CHEBI:57518"/>
    </ligand>
</feature>
<feature type="binding site" evidence="3">
    <location>
        <position position="231"/>
    </location>
    <ligand>
        <name>1-tetradecanoyl-sn-glycerol 3-phosphate</name>
        <dbReference type="ChEBI" id="CHEBI:72683"/>
    </ligand>
</feature>
<feature type="binding site" evidence="3">
    <location>
        <position position="312"/>
    </location>
    <ligand>
        <name>1-(9Z-octadecenoyl)-sn-glycero-3-phosphate</name>
        <dbReference type="ChEBI" id="CHEBI:74544"/>
    </ligand>
</feature>
<feature type="binding site" evidence="3">
    <location>
        <position position="312"/>
    </location>
    <ligand>
        <name>1-hexadecanoyl-sn-glycero-3-phosphate</name>
        <dbReference type="ChEBI" id="CHEBI:57518"/>
    </ligand>
</feature>
<feature type="binding site" evidence="3">
    <location>
        <position position="312"/>
    </location>
    <ligand>
        <name>1-tetradecanoyl-sn-glycerol 3-phosphate</name>
        <dbReference type="ChEBI" id="CHEBI:72683"/>
    </ligand>
</feature>
<feature type="binding site" evidence="1">
    <location>
        <position position="312"/>
    </location>
    <ligand>
        <name>Zn(2+)</name>
        <dbReference type="ChEBI" id="CHEBI:29105"/>
        <label>2</label>
        <note>catalytic</note>
    </ligand>
</feature>
<feature type="binding site" evidence="1">
    <location>
        <position position="316"/>
    </location>
    <ligand>
        <name>Zn(2+)</name>
        <dbReference type="ChEBI" id="CHEBI:29105"/>
        <label>2</label>
        <note>catalytic</note>
    </ligand>
</feature>
<feature type="binding site" evidence="1">
    <location>
        <position position="359"/>
    </location>
    <ligand>
        <name>Zn(2+)</name>
        <dbReference type="ChEBI" id="CHEBI:29105"/>
        <label>1</label>
        <note>catalytic</note>
    </ligand>
</feature>
<feature type="binding site" evidence="1">
    <location>
        <position position="360"/>
    </location>
    <ligand>
        <name>Zn(2+)</name>
        <dbReference type="ChEBI" id="CHEBI:29105"/>
        <label>1</label>
        <note>catalytic</note>
    </ligand>
</feature>
<feature type="binding site" evidence="3">
    <location>
        <position position="475"/>
    </location>
    <ligand>
        <name>1-(9Z-octadecenoyl)-sn-glycero-3-phosphate</name>
        <dbReference type="ChEBI" id="CHEBI:74544"/>
    </ligand>
</feature>
<feature type="binding site" evidence="3">
    <location>
        <position position="475"/>
    </location>
    <ligand>
        <name>1-hexadecanoyl-sn-glycero-3-phosphate</name>
        <dbReference type="ChEBI" id="CHEBI:57518"/>
    </ligand>
</feature>
<feature type="binding site" evidence="3">
    <location>
        <position position="475"/>
    </location>
    <ligand>
        <name>1-tetradecanoyl-sn-glycerol 3-phosphate</name>
        <dbReference type="ChEBI" id="CHEBI:72683"/>
    </ligand>
</feature>
<feature type="binding site" evidence="1">
    <location>
        <position position="475"/>
    </location>
    <ligand>
        <name>Zn(2+)</name>
        <dbReference type="ChEBI" id="CHEBI:29105"/>
        <label>2</label>
        <note>catalytic</note>
    </ligand>
</feature>
<feature type="binding site" evidence="1">
    <location>
        <position position="765"/>
    </location>
    <ligand>
        <name>Ca(2+)</name>
        <dbReference type="ChEBI" id="CHEBI:29108"/>
    </ligand>
</feature>
<feature type="binding site" evidence="1">
    <location>
        <position position="767"/>
    </location>
    <ligand>
        <name>Ca(2+)</name>
        <dbReference type="ChEBI" id="CHEBI:29108"/>
    </ligand>
</feature>
<feature type="binding site" evidence="1">
    <location>
        <position position="769"/>
    </location>
    <ligand>
        <name>Ca(2+)</name>
        <dbReference type="ChEBI" id="CHEBI:29108"/>
    </ligand>
</feature>
<feature type="binding site" evidence="1">
    <location>
        <position position="771"/>
    </location>
    <ligand>
        <name>Ca(2+)</name>
        <dbReference type="ChEBI" id="CHEBI:29108"/>
    </ligand>
</feature>
<feature type="binding site" evidence="1">
    <location>
        <position position="773"/>
    </location>
    <ligand>
        <name>Ca(2+)</name>
        <dbReference type="ChEBI" id="CHEBI:29108"/>
    </ligand>
</feature>
<feature type="site" description="Essential for catalytic activity" evidence="3">
    <location>
        <position position="878"/>
    </location>
</feature>
<feature type="glycosylation site" description="N-linked (GlcNAc...) asparagine" evidence="4">
    <location>
        <position position="54"/>
    </location>
</feature>
<feature type="glycosylation site" description="N-linked (GlcNAc...) asparagine" evidence="4">
    <location>
        <position position="411"/>
    </location>
</feature>
<feature type="glycosylation site" description="N-linked (GlcNAc...) asparagine" evidence="4">
    <location>
        <position position="525"/>
    </location>
</feature>
<feature type="glycosylation site" description="N-linked (GlcNAc...) asparagine" evidence="4">
    <location>
        <position position="832"/>
    </location>
</feature>
<feature type="disulfide bond" evidence="5">
    <location>
        <begin position="59"/>
        <end position="76"/>
    </location>
</feature>
<feature type="disulfide bond" evidence="5">
    <location>
        <begin position="63"/>
        <end position="94"/>
    </location>
</feature>
<feature type="disulfide bond" evidence="5">
    <location>
        <begin position="74"/>
        <end position="87"/>
    </location>
</feature>
<feature type="disulfide bond" evidence="5">
    <location>
        <begin position="80"/>
        <end position="86"/>
    </location>
</feature>
<feature type="disulfide bond" evidence="5">
    <location>
        <begin position="103"/>
        <end position="120"/>
    </location>
</feature>
<feature type="disulfide bond" evidence="5">
    <location>
        <begin position="108"/>
        <end position="138"/>
    </location>
</feature>
<feature type="disulfide bond" evidence="5">
    <location>
        <begin position="118"/>
        <end position="131"/>
    </location>
</feature>
<feature type="disulfide bond" evidence="5">
    <location>
        <begin position="124"/>
        <end position="130"/>
    </location>
</feature>
<feature type="disulfide bond" evidence="5">
    <location>
        <begin position="149"/>
        <end position="195"/>
    </location>
</feature>
<feature type="disulfide bond" evidence="5">
    <location>
        <begin position="157"/>
        <end position="351"/>
    </location>
</feature>
<feature type="disulfide bond" evidence="5">
    <location>
        <begin position="367"/>
        <end position="469"/>
    </location>
</feature>
<feature type="disulfide bond" evidence="5">
    <location>
        <begin position="414"/>
        <end position="831"/>
    </location>
</feature>
<feature type="disulfide bond" evidence="5">
    <location>
        <begin position="567"/>
        <end position="692"/>
    </location>
</feature>
<feature type="disulfide bond" evidence="5">
    <location>
        <begin position="569"/>
        <end position="677"/>
    </location>
</feature>
<feature type="disulfide bond" evidence="5">
    <location>
        <begin position="800"/>
        <end position="810"/>
    </location>
</feature>
<feature type="sequence conflict" description="In Ref. 2; AA sequence." evidence="8" ref="2">
    <original>Q</original>
    <variation>E</variation>
    <location>
        <position position="775"/>
    </location>
</feature>
<sequence length="888" mass="101717">MARRRSCQLHQVISLFTFAVGVNICLGVTANRIKRAEGWGEGPPTVLSDSPSINISGSCKGRCFELQEAGPPDCRCDNLCKSYSSCCLDFDELCLKTAGGWECTKDRCGEVRNEDHACHCSEDCLARGDCCTNYQVVCKGESHWVDDDCEEIKTPECPAGFVRPPLIIFSVDGFRASYMKKGSKVMPNIEKLRSCGTHSPYMRPVYPTKTFPNLYTLATGLYPESHGIVGNSMYDPVFDAHFNLRGREKFNHRWWGGQPLWITATKQGVIAGTFFWPVVIPHERRILTILQWLTLPDHERPSVYAFYSEQPDFSGHKYGPFGPEMTNPLRDIDKTVGQLMDGLKQLKLHRCVNVIFVGDHGMEDVTCDRTEFLSNYLTNVDDIILVPGTLGRIRPKFNNHAKYDPKVIIANLTCKKPDQHFKPYLKQHLPKRLHYANNRRIEDVHLLVERRWHVARKPLEVYKKPSGKCFFQGDHGFDNKVNSMQTVFVGYGPTFKYKTKVPPFENIELYNVMCDLLGLKPAPNNGTHGSLNHLLRTNTFRPTVPEEVTRPNYPGVMYLQSDFDLGCTCDDKAEPKNKLDELNKHLHIKESTEAETRKFRGSKNEIKENVNGNFEPRKERHLLYGRPAVLYRTRYDILYHTDFESGYSEIFLMPLWTSYTVSKQADVSDIPAHLTNCVRPDVRVSPSFSQSCLAYKNDKQMSYGFLFPPYLSSSPEAKYDAFLVTNMVPMYPAFKRIWNYFQRVLVKKYASERNGVNVISGPIFDYDYDGLHDTQDKIKQYVEGSSVPVPTHYYSILTSCLDFTQPADRCDGPLSVSAFVLPHRPDNDESCNSSEDESKWVEELLKMHTARVRDIEHLTSLDFFRKTSRSYPEILTLKTYLQTYESEI</sequence>
<organism>
    <name type="scientific">Bos taurus</name>
    <name type="common">Bovine</name>
    <dbReference type="NCBI Taxonomy" id="9913"/>
    <lineage>
        <taxon>Eukaryota</taxon>
        <taxon>Metazoa</taxon>
        <taxon>Chordata</taxon>
        <taxon>Craniata</taxon>
        <taxon>Vertebrata</taxon>
        <taxon>Euteleostomi</taxon>
        <taxon>Mammalia</taxon>
        <taxon>Eutheria</taxon>
        <taxon>Laurasiatheria</taxon>
        <taxon>Artiodactyla</taxon>
        <taxon>Ruminantia</taxon>
        <taxon>Pecora</taxon>
        <taxon>Bovidae</taxon>
        <taxon>Bovinae</taxon>
        <taxon>Bos</taxon>
    </lineage>
</organism>
<name>ENPP2_BOVIN</name>
<comment type="function">
    <text evidence="1 6">Secreted lysophospholipase D that hydrolyzes lysophospholipids to produce the signaling molecule lysophosphatidic acid (LPA) in extracellular fluids. Its major substrate is lysophosphatidylcholine (PubMed:12119361). Can also act on sphingosylphosphorylcholine producing sphingosine-1-phosphate, a modulator of cell motility. Can hydrolyze, in vitro, bis-pNPP, to some extent pNP-TMP, and barely ATP. Involved in several motility-related processes such as angiogenesis and neurite outgrowth. Acts as an angiogenic factor by stimulating migration of smooth muscle cells and microtubule formation. Stimulates migration of melanoma cells, probably via a pertussis toxin-sensitive G protein. May have a role in induction of parturition. Possible involvement in cell proliferation and adipose tissue development (By similarity). Required for LPA production in activated platelets, cleaves the sn-1 lysophospholipids to generate sn-1 lysophosphatidic acids containing predominantly 18:2 and 20:4 fatty acids (By similarity). Shows a preference for the sn-1 to the sn-2 isomer of 1-O-alkyl-sn-glycero-3-phosphocholine (lyso-PAF) (By similarity).</text>
</comment>
<comment type="catalytic activity">
    <reaction evidence="6">
        <text>a 1-O-alkyl-sn-glycero-3-phosphoethanolamine + H2O = a 1-O-alkyl-sn-glycero-3-phosphate + ethanolamine + H(+)</text>
        <dbReference type="Rhea" id="RHEA:15965"/>
        <dbReference type="ChEBI" id="CHEBI:15377"/>
        <dbReference type="ChEBI" id="CHEBI:15378"/>
        <dbReference type="ChEBI" id="CHEBI:57603"/>
        <dbReference type="ChEBI" id="CHEBI:58014"/>
        <dbReference type="ChEBI" id="CHEBI:76168"/>
        <dbReference type="EC" id="3.1.4.39"/>
    </reaction>
</comment>
<comment type="catalytic activity">
    <reaction evidence="2">
        <text>a 1-acyl-sn-glycero-3-phosphoethanolamine + H2O = a 1-acyl-sn-glycero-3-phosphate + ethanolamine + H(+)</text>
        <dbReference type="Rhea" id="RHEA:39003"/>
        <dbReference type="ChEBI" id="CHEBI:15377"/>
        <dbReference type="ChEBI" id="CHEBI:15378"/>
        <dbReference type="ChEBI" id="CHEBI:57603"/>
        <dbReference type="ChEBI" id="CHEBI:57970"/>
        <dbReference type="ChEBI" id="CHEBI:64381"/>
    </reaction>
    <physiologicalReaction direction="left-to-right" evidence="2">
        <dbReference type="Rhea" id="RHEA:39004"/>
    </physiologicalReaction>
</comment>
<comment type="catalytic activity">
    <reaction evidence="2">
        <text>1-(9Z-octadecenoyl)-sn-glycero-3-phosphoethanolamine + H2O = 1-(9Z-octadecenoyl)-sn-glycero-3-phosphate + ethanolamine + H(+)</text>
        <dbReference type="Rhea" id="RHEA:38927"/>
        <dbReference type="ChEBI" id="CHEBI:15377"/>
        <dbReference type="ChEBI" id="CHEBI:15378"/>
        <dbReference type="ChEBI" id="CHEBI:57603"/>
        <dbReference type="ChEBI" id="CHEBI:74544"/>
        <dbReference type="ChEBI" id="CHEBI:74971"/>
    </reaction>
    <physiologicalReaction direction="left-to-right" evidence="2">
        <dbReference type="Rhea" id="RHEA:38928"/>
    </physiologicalReaction>
</comment>
<comment type="catalytic activity">
    <reaction evidence="1">
        <text>a 1-O-alkyl-sn-glycero-3-phosphocholine + H2O = a 1-O-alkyl-sn-glycero-3-phosphate + choline + H(+)</text>
        <dbReference type="Rhea" id="RHEA:39927"/>
        <dbReference type="ChEBI" id="CHEBI:15354"/>
        <dbReference type="ChEBI" id="CHEBI:15377"/>
        <dbReference type="ChEBI" id="CHEBI:15378"/>
        <dbReference type="ChEBI" id="CHEBI:30909"/>
        <dbReference type="ChEBI" id="CHEBI:58014"/>
    </reaction>
    <physiologicalReaction direction="left-to-right" evidence="1">
        <dbReference type="Rhea" id="RHEA:39928"/>
    </physiologicalReaction>
</comment>
<comment type="catalytic activity">
    <reaction evidence="1">
        <text>1-O-(9Z-octadecenyl)-sn-glycero-3-phosphocholine + H2O = 1-O-(9Z-octadecenyl)-sn-glycero-3-phosphate + choline + H(+)</text>
        <dbReference type="Rhea" id="RHEA:41684"/>
        <dbReference type="ChEBI" id="CHEBI:15354"/>
        <dbReference type="ChEBI" id="CHEBI:15377"/>
        <dbReference type="ChEBI" id="CHEBI:15378"/>
        <dbReference type="ChEBI" id="CHEBI:64396"/>
        <dbReference type="ChEBI" id="CHEBI:78402"/>
    </reaction>
    <physiologicalReaction direction="left-to-right" evidence="1">
        <dbReference type="Rhea" id="RHEA:41685"/>
    </physiologicalReaction>
</comment>
<comment type="catalytic activity">
    <reaction evidence="1">
        <text>1-O-hexadecyl-sn-glycero-3-phosphocholine + H2O = 1-O-hexadecyl-sn-glycero-3-phosphate + choline + H(+)</text>
        <dbReference type="Rhea" id="RHEA:41143"/>
        <dbReference type="ChEBI" id="CHEBI:15354"/>
        <dbReference type="ChEBI" id="CHEBI:15377"/>
        <dbReference type="ChEBI" id="CHEBI:15378"/>
        <dbReference type="ChEBI" id="CHEBI:64496"/>
        <dbReference type="ChEBI" id="CHEBI:77580"/>
    </reaction>
    <physiologicalReaction direction="left-to-right" evidence="1">
        <dbReference type="Rhea" id="RHEA:41144"/>
    </physiologicalReaction>
</comment>
<comment type="catalytic activity">
    <reaction evidence="1">
        <text>a 1-O-(1Z-alkenyl)-sn-glycero-3-phosphocholine + H2O = a 1-O-(1Z-alkenyl)-sn-glycero-3-phosphate + choline + H(+)</text>
        <dbReference type="Rhea" id="RHEA:41588"/>
        <dbReference type="ChEBI" id="CHEBI:15354"/>
        <dbReference type="ChEBI" id="CHEBI:15377"/>
        <dbReference type="ChEBI" id="CHEBI:15378"/>
        <dbReference type="ChEBI" id="CHEBI:77283"/>
        <dbReference type="ChEBI" id="CHEBI:77287"/>
    </reaction>
    <physiologicalReaction direction="left-to-right" evidence="1">
        <dbReference type="Rhea" id="RHEA:41589"/>
    </physiologicalReaction>
</comment>
<comment type="catalytic activity">
    <reaction evidence="1">
        <text>a 1-acyl-sn-glycero-3-phosphocholine + H2O = a 1-acyl-sn-glycero-3-phosphate + choline + H(+)</text>
        <dbReference type="Rhea" id="RHEA:38995"/>
        <dbReference type="ChEBI" id="CHEBI:15354"/>
        <dbReference type="ChEBI" id="CHEBI:15377"/>
        <dbReference type="ChEBI" id="CHEBI:15378"/>
        <dbReference type="ChEBI" id="CHEBI:57970"/>
        <dbReference type="ChEBI" id="CHEBI:58168"/>
        <dbReference type="EC" id="3.1.4.4"/>
    </reaction>
    <physiologicalReaction direction="left-to-right" evidence="1">
        <dbReference type="Rhea" id="RHEA:38996"/>
    </physiologicalReaction>
</comment>
<comment type="catalytic activity">
    <reaction evidence="1">
        <text>1-dodecanoyl-sn-glycero-3-phosphocholine + H2O = 1-dodecanoyl-sn-glycerol 3-phosphate + choline + H(+)</text>
        <dbReference type="Rhea" id="RHEA:38991"/>
        <dbReference type="ChEBI" id="CHEBI:15354"/>
        <dbReference type="ChEBI" id="CHEBI:15377"/>
        <dbReference type="ChEBI" id="CHEBI:15378"/>
        <dbReference type="ChEBI" id="CHEBI:72682"/>
        <dbReference type="ChEBI" id="CHEBI:74966"/>
    </reaction>
    <physiologicalReaction direction="left-to-right" evidence="1">
        <dbReference type="Rhea" id="RHEA:38992"/>
    </physiologicalReaction>
</comment>
<comment type="catalytic activity">
    <reaction evidence="1">
        <text>1-(9Z-octadecenoyl)-sn-glycero-3-phosphocholine + H2O = 1-(9Z-octadecenoyl)-sn-glycero-3-phosphate + choline + H(+)</text>
        <dbReference type="Rhea" id="RHEA:38915"/>
        <dbReference type="ChEBI" id="CHEBI:15354"/>
        <dbReference type="ChEBI" id="CHEBI:15377"/>
        <dbReference type="ChEBI" id="CHEBI:15378"/>
        <dbReference type="ChEBI" id="CHEBI:28610"/>
        <dbReference type="ChEBI" id="CHEBI:74544"/>
    </reaction>
    <physiologicalReaction direction="left-to-right" evidence="1">
        <dbReference type="Rhea" id="RHEA:38916"/>
    </physiologicalReaction>
</comment>
<comment type="catalytic activity">
    <reaction evidence="1">
        <text>1-tetradecanoyl-sn-glycero-3-phosphocholine + H2O = 1-tetradecanoyl-sn-glycerol 3-phosphate + choline + H(+)</text>
        <dbReference type="Rhea" id="RHEA:38983"/>
        <dbReference type="ChEBI" id="CHEBI:15354"/>
        <dbReference type="ChEBI" id="CHEBI:15377"/>
        <dbReference type="ChEBI" id="CHEBI:15378"/>
        <dbReference type="ChEBI" id="CHEBI:64489"/>
        <dbReference type="ChEBI" id="CHEBI:72683"/>
    </reaction>
    <physiologicalReaction direction="left-to-right" evidence="1">
        <dbReference type="Rhea" id="RHEA:38984"/>
    </physiologicalReaction>
</comment>
<comment type="catalytic activity">
    <reaction evidence="1">
        <text>1-decanoyl-sn-glycero-3-phosphocholine + H2O = 1-decanoyl-sn-glycero-3-phosphate + choline + H(+)</text>
        <dbReference type="Rhea" id="RHEA:41131"/>
        <dbReference type="ChEBI" id="CHEBI:15354"/>
        <dbReference type="ChEBI" id="CHEBI:15377"/>
        <dbReference type="ChEBI" id="CHEBI:15378"/>
        <dbReference type="ChEBI" id="CHEBI:77724"/>
        <dbReference type="ChEBI" id="CHEBI:77726"/>
    </reaction>
    <physiologicalReaction direction="left-to-right" evidence="1">
        <dbReference type="Rhea" id="RHEA:41132"/>
    </physiologicalReaction>
</comment>
<comment type="catalytic activity">
    <reaction evidence="1">
        <text>1-octadecanoyl-sn-glycero-3-phosphocholine + H2O = 1-octadecanoyl-sn-glycero-3-phosphate + choline + H(+)</text>
        <dbReference type="Rhea" id="RHEA:38979"/>
        <dbReference type="ChEBI" id="CHEBI:15354"/>
        <dbReference type="ChEBI" id="CHEBI:15377"/>
        <dbReference type="ChEBI" id="CHEBI:15378"/>
        <dbReference type="ChEBI" id="CHEBI:73858"/>
        <dbReference type="ChEBI" id="CHEBI:74565"/>
    </reaction>
    <physiologicalReaction direction="left-to-right" evidence="1">
        <dbReference type="Rhea" id="RHEA:38980"/>
    </physiologicalReaction>
</comment>
<comment type="catalytic activity">
    <reaction evidence="1">
        <text>1-hexadecanoyl-sn-glycero-3-phosphocholine + H2O = 1-hexadecanoyl-sn-glycero-3-phosphate + choline + H(+)</text>
        <dbReference type="Rhea" id="RHEA:38975"/>
        <dbReference type="ChEBI" id="CHEBI:15354"/>
        <dbReference type="ChEBI" id="CHEBI:15377"/>
        <dbReference type="ChEBI" id="CHEBI:15378"/>
        <dbReference type="ChEBI" id="CHEBI:57518"/>
        <dbReference type="ChEBI" id="CHEBI:72998"/>
    </reaction>
    <physiologicalReaction direction="left-to-right" evidence="1">
        <dbReference type="Rhea" id="RHEA:38976"/>
    </physiologicalReaction>
</comment>
<comment type="catalytic activity">
    <reaction evidence="1">
        <text>1-hexanoyl-sn-glycero-3-phosphocholine + H2O = 1-hexanoyl-sn-glycero-3-phosphate + choline + H(+)</text>
        <dbReference type="Rhea" id="RHEA:41400"/>
        <dbReference type="ChEBI" id="CHEBI:15354"/>
        <dbReference type="ChEBI" id="CHEBI:15377"/>
        <dbReference type="ChEBI" id="CHEBI:15378"/>
        <dbReference type="ChEBI" id="CHEBI:78215"/>
        <dbReference type="ChEBI" id="CHEBI:78223"/>
    </reaction>
    <physiologicalReaction direction="left-to-right" evidence="1">
        <dbReference type="Rhea" id="RHEA:41401"/>
    </physiologicalReaction>
</comment>
<comment type="catalytic activity">
    <reaction evidence="1">
        <text>1-(9Z,12Z)-octadecadienoyl-sn-glycero-3-phosphocholine + H2O = 1-(9Z,12Z)-octadecadienoyl-sn-glycero-3-phosphate + choline + H(+)</text>
        <dbReference type="Rhea" id="RHEA:41135"/>
        <dbReference type="ChEBI" id="CHEBI:15354"/>
        <dbReference type="ChEBI" id="CHEBI:15377"/>
        <dbReference type="ChEBI" id="CHEBI:15378"/>
        <dbReference type="ChEBI" id="CHEBI:28733"/>
        <dbReference type="ChEBI" id="CHEBI:74547"/>
    </reaction>
    <physiologicalReaction direction="left-to-right" evidence="1">
        <dbReference type="Rhea" id="RHEA:41136"/>
    </physiologicalReaction>
</comment>
<comment type="catalytic activity">
    <reaction evidence="1">
        <text>sphing-4-enine-phosphocholine + H2O = sphing-4-enine 1-phosphate + choline + H(+)</text>
        <dbReference type="Rhea" id="RHEA:38919"/>
        <dbReference type="ChEBI" id="CHEBI:15354"/>
        <dbReference type="ChEBI" id="CHEBI:15377"/>
        <dbReference type="ChEBI" id="CHEBI:15378"/>
        <dbReference type="ChEBI" id="CHEBI:58906"/>
        <dbReference type="ChEBI" id="CHEBI:60119"/>
    </reaction>
    <physiologicalReaction direction="left-to-right" evidence="1">
        <dbReference type="Rhea" id="RHEA:38920"/>
    </physiologicalReaction>
</comment>
<comment type="catalytic activity">
    <reaction evidence="1">
        <text>1-(5Z,8Z,11Z,14Z-eicosatetraenoyl)-sn-glycero-3-phosphocholine + H2O = 1-(5Z,8Z,11Z,14Z-eicosatetraenoyl)-sn-glycero-3-phosphate + choline + H(+)</text>
        <dbReference type="Rhea" id="RHEA:41139"/>
        <dbReference type="ChEBI" id="CHEBI:15354"/>
        <dbReference type="ChEBI" id="CHEBI:15377"/>
        <dbReference type="ChEBI" id="CHEBI:15378"/>
        <dbReference type="ChEBI" id="CHEBI:74344"/>
        <dbReference type="ChEBI" id="CHEBI:74938"/>
    </reaction>
    <physiologicalReaction direction="left-to-right" evidence="1">
        <dbReference type="Rhea" id="RHEA:41140"/>
    </physiologicalReaction>
</comment>
<comment type="catalytic activity">
    <reaction evidence="1">
        <text>a 2-acyl-sn-glycero-3-phosphocholine + H2O = a 2-acyl-sn-glycerol 3-phosphate + choline + H(+)</text>
        <dbReference type="Rhea" id="RHEA:41712"/>
        <dbReference type="ChEBI" id="CHEBI:15354"/>
        <dbReference type="ChEBI" id="CHEBI:15377"/>
        <dbReference type="ChEBI" id="CHEBI:15378"/>
        <dbReference type="ChEBI" id="CHEBI:57875"/>
        <dbReference type="ChEBI" id="CHEBI:64982"/>
    </reaction>
    <physiologicalReaction direction="left-to-right" evidence="1">
        <dbReference type="Rhea" id="RHEA:41713"/>
    </physiologicalReaction>
</comment>
<comment type="catalytic activity">
    <reaction evidence="1">
        <text>a 1,2-diacyl-sn-glycero-3-phosphocholine + H2O = a 1,2-diacyl-sn-glycero-3-phosphate + choline + H(+)</text>
        <dbReference type="Rhea" id="RHEA:14445"/>
        <dbReference type="ChEBI" id="CHEBI:15354"/>
        <dbReference type="ChEBI" id="CHEBI:15377"/>
        <dbReference type="ChEBI" id="CHEBI:15378"/>
        <dbReference type="ChEBI" id="CHEBI:57643"/>
        <dbReference type="ChEBI" id="CHEBI:58608"/>
        <dbReference type="EC" id="3.1.4.4"/>
    </reaction>
    <physiologicalReaction direction="left-to-right" evidence="1">
        <dbReference type="Rhea" id="RHEA:14446"/>
    </physiologicalReaction>
</comment>
<comment type="catalytic activity">
    <reaction evidence="1">
        <text>1,2-dioctanoyl-sn-glycero-3-phosphocholine + H2O = 1,2-dioctanoyl-sn-glycero-3-phosphate + choline + H(+)</text>
        <dbReference type="Rhea" id="RHEA:41416"/>
        <dbReference type="ChEBI" id="CHEBI:15354"/>
        <dbReference type="ChEBI" id="CHEBI:15377"/>
        <dbReference type="ChEBI" id="CHEBI:15378"/>
        <dbReference type="ChEBI" id="CHEBI:78228"/>
        <dbReference type="ChEBI" id="CHEBI:78229"/>
    </reaction>
    <physiologicalReaction direction="left-to-right" evidence="1">
        <dbReference type="Rhea" id="RHEA:41417"/>
    </physiologicalReaction>
</comment>
<comment type="catalytic activity">
    <reaction evidence="1">
        <text>1,2-didecanoyl-sn-glycero-3-phosphocholine + H2O = 1,2-didecanoyl-sn-glycero-3-phosphate + choline + H(+)</text>
        <dbReference type="Rhea" id="RHEA:41412"/>
        <dbReference type="ChEBI" id="CHEBI:15354"/>
        <dbReference type="ChEBI" id="CHEBI:15377"/>
        <dbReference type="ChEBI" id="CHEBI:15378"/>
        <dbReference type="ChEBI" id="CHEBI:78226"/>
        <dbReference type="ChEBI" id="CHEBI:78227"/>
    </reaction>
    <physiologicalReaction direction="left-to-right" evidence="1">
        <dbReference type="Rhea" id="RHEA:41413"/>
    </physiologicalReaction>
</comment>
<comment type="catalytic activity">
    <reaction evidence="2">
        <text>a 1-acyl-sn-glycero-3-phospho-L-serine + H2O = a 1-acyl-sn-glycero-3-phosphate + L-serine + H(+)</text>
        <dbReference type="Rhea" id="RHEA:38999"/>
        <dbReference type="ChEBI" id="CHEBI:15377"/>
        <dbReference type="ChEBI" id="CHEBI:15378"/>
        <dbReference type="ChEBI" id="CHEBI:33384"/>
        <dbReference type="ChEBI" id="CHEBI:57970"/>
        <dbReference type="ChEBI" id="CHEBI:64379"/>
    </reaction>
    <physiologicalReaction direction="left-to-right" evidence="2">
        <dbReference type="Rhea" id="RHEA:39000"/>
    </physiologicalReaction>
</comment>
<comment type="catalytic activity">
    <reaction evidence="2">
        <text>1-(9Z-octadecenoyl)-sn-glycero-3-phospho-L-serine + H2O = 1-(9Z-octadecenoyl)-sn-glycero-3-phosphate + L-serine + H(+)</text>
        <dbReference type="Rhea" id="RHEA:38931"/>
        <dbReference type="ChEBI" id="CHEBI:15377"/>
        <dbReference type="ChEBI" id="CHEBI:15378"/>
        <dbReference type="ChEBI" id="CHEBI:33384"/>
        <dbReference type="ChEBI" id="CHEBI:74544"/>
        <dbReference type="ChEBI" id="CHEBI:74617"/>
    </reaction>
    <physiologicalReaction direction="left-to-right" evidence="2">
        <dbReference type="Rhea" id="RHEA:38932"/>
    </physiologicalReaction>
</comment>
<comment type="catalytic activity">
    <reaction evidence="1">
        <text>a 2-acyl-sn-glycero-3-phospho-L-serine + H2O = a 2-acyl-sn-glycerol 3-phosphate + L-serine + H(+)</text>
        <dbReference type="Rhea" id="RHEA:41716"/>
        <dbReference type="ChEBI" id="CHEBI:15377"/>
        <dbReference type="ChEBI" id="CHEBI:15378"/>
        <dbReference type="ChEBI" id="CHEBI:33384"/>
        <dbReference type="ChEBI" id="CHEBI:64982"/>
        <dbReference type="ChEBI" id="CHEBI:65214"/>
    </reaction>
    <physiologicalReaction direction="left-to-right" evidence="1">
        <dbReference type="Rhea" id="RHEA:41717"/>
    </physiologicalReaction>
</comment>
<comment type="cofactor">
    <cofactor evidence="1">
        <name>Zn(2+)</name>
        <dbReference type="ChEBI" id="CHEBI:29105"/>
    </cofactor>
    <text evidence="1">Binds 2 Zn(2+) ions per subunit.</text>
</comment>
<comment type="cofactor">
    <cofactor evidence="1">
        <name>Ca(2+)</name>
        <dbReference type="ChEBI" id="CHEBI:29108"/>
    </cofactor>
    <text evidence="1">Binds 1 Ca(2+) ion per subunit.</text>
</comment>
<comment type="subcellular location">
    <subcellularLocation>
        <location evidence="6">Secreted</location>
    </subcellularLocation>
</comment>
<comment type="tissue specificity">
    <text evidence="6">Detected in fetal serum (at protein level).</text>
</comment>
<comment type="domain">
    <text evidence="3">The nuclease-like domain is most probably catalytically inactive as residues that are essential for catalysis in the DNA/RNA non-specific endonucleases are not conserved. However, it is required for the stability of the protein and the catalytic activity born by the Phosphodiesterase domain.</text>
</comment>
<comment type="PTM">
    <text evidence="3">N-glycosylation, but not furin-cleavage, plays a critical role on secretion and on lysoPLD activity.</text>
</comment>
<comment type="PTM">
    <text evidence="3">The interdomain disulfide bond between Cys-414 and Cys-831 is essential for catalytic activity.</text>
</comment>
<comment type="similarity">
    <text evidence="8">Belongs to the nucleotide pyrophosphatase/phosphodiesterase family.</text>
</comment>
<proteinExistence type="evidence at protein level"/>
<evidence type="ECO:0000250" key="1">
    <source>
        <dbReference type="UniProtKB" id="Q13822"/>
    </source>
</evidence>
<evidence type="ECO:0000250" key="2">
    <source>
        <dbReference type="UniProtKB" id="Q64610"/>
    </source>
</evidence>
<evidence type="ECO:0000250" key="3">
    <source>
        <dbReference type="UniProtKB" id="Q9R1E6"/>
    </source>
</evidence>
<evidence type="ECO:0000255" key="4"/>
<evidence type="ECO:0000255" key="5">
    <source>
        <dbReference type="PROSITE-ProRule" id="PRU00350"/>
    </source>
</evidence>
<evidence type="ECO:0000269" key="6">
    <source>
    </source>
</evidence>
<evidence type="ECO:0000303" key="7">
    <source>
    </source>
</evidence>
<evidence type="ECO:0000305" key="8"/>
<dbReference type="EC" id="3.1.4.39" evidence="6"/>
<dbReference type="EC" id="3.1.4.4" evidence="1"/>
<dbReference type="EMBL" id="BC126631">
    <property type="protein sequence ID" value="AAI26632.1"/>
    <property type="molecule type" value="mRNA"/>
</dbReference>
<dbReference type="RefSeq" id="NP_001073762.1">
    <property type="nucleotide sequence ID" value="NM_001080293.1"/>
</dbReference>
<dbReference type="SMR" id="A1A4K5"/>
<dbReference type="FunCoup" id="A1A4K5">
    <property type="interactions" value="105"/>
</dbReference>
<dbReference type="STRING" id="9913.ENSBTAP00000036974"/>
<dbReference type="ChEMBL" id="CHEMBL2021747"/>
<dbReference type="GlyCosmos" id="A1A4K5">
    <property type="glycosylation" value="4 sites, No reported glycans"/>
</dbReference>
<dbReference type="GlyGen" id="A1A4K5">
    <property type="glycosylation" value="4 sites"/>
</dbReference>
<dbReference type="PaxDb" id="9913-ENSBTAP00000036974"/>
<dbReference type="Ensembl" id="ENSBTAT00000076817.2">
    <property type="protein sequence ID" value="ENSBTAP00000059889.2"/>
    <property type="gene ID" value="ENSBTAG00000013165.7"/>
</dbReference>
<dbReference type="GeneID" id="532663"/>
<dbReference type="KEGG" id="bta:532663"/>
<dbReference type="CTD" id="5168"/>
<dbReference type="VEuPathDB" id="HostDB:ENSBTAG00000013165"/>
<dbReference type="VGNC" id="VGNC:28505">
    <property type="gene designation" value="ENPP2"/>
</dbReference>
<dbReference type="eggNOG" id="KOG2645">
    <property type="taxonomic scope" value="Eukaryota"/>
</dbReference>
<dbReference type="GeneTree" id="ENSGT00940000155778"/>
<dbReference type="HOGENOM" id="CLU_012256_0_0_1"/>
<dbReference type="InParanoid" id="A1A4K5"/>
<dbReference type="OMA" id="NICLGYT"/>
<dbReference type="OrthoDB" id="415411at2759"/>
<dbReference type="TreeFam" id="TF330032"/>
<dbReference type="PRO" id="PR:A1A4K5"/>
<dbReference type="Proteomes" id="UP000009136">
    <property type="component" value="Chromosome 14"/>
</dbReference>
<dbReference type="Bgee" id="ENSBTAG00000013165">
    <property type="expression patterns" value="Expressed in midbrain and 106 other cell types or tissues"/>
</dbReference>
<dbReference type="GO" id="GO:0005615">
    <property type="term" value="C:extracellular space"/>
    <property type="evidence" value="ECO:0000250"/>
    <property type="project" value="UniProtKB"/>
</dbReference>
<dbReference type="GO" id="GO:0016020">
    <property type="term" value="C:membrane"/>
    <property type="evidence" value="ECO:0007669"/>
    <property type="project" value="GOC"/>
</dbReference>
<dbReference type="GO" id="GO:0047391">
    <property type="term" value="F:alkylglycerophosphoethanolamine phosphodiesterase activity"/>
    <property type="evidence" value="ECO:0000318"/>
    <property type="project" value="GO_Central"/>
</dbReference>
<dbReference type="GO" id="GO:0005509">
    <property type="term" value="F:calcium ion binding"/>
    <property type="evidence" value="ECO:0000250"/>
    <property type="project" value="UniProtKB"/>
</dbReference>
<dbReference type="GO" id="GO:0004622">
    <property type="term" value="F:lysophospholipase activity"/>
    <property type="evidence" value="ECO:0000250"/>
    <property type="project" value="UniProtKB"/>
</dbReference>
<dbReference type="GO" id="GO:0003676">
    <property type="term" value="F:nucleic acid binding"/>
    <property type="evidence" value="ECO:0007669"/>
    <property type="project" value="InterPro"/>
</dbReference>
<dbReference type="GO" id="GO:0004528">
    <property type="term" value="F:phosphodiesterase I activity"/>
    <property type="evidence" value="ECO:0000318"/>
    <property type="project" value="GO_Central"/>
</dbReference>
<dbReference type="GO" id="GO:0004630">
    <property type="term" value="F:phospholipase D activity"/>
    <property type="evidence" value="ECO:0007669"/>
    <property type="project" value="RHEA"/>
</dbReference>
<dbReference type="GO" id="GO:0030247">
    <property type="term" value="F:polysaccharide binding"/>
    <property type="evidence" value="ECO:0007669"/>
    <property type="project" value="InterPro"/>
</dbReference>
<dbReference type="GO" id="GO:0005044">
    <property type="term" value="F:scavenger receptor activity"/>
    <property type="evidence" value="ECO:0007669"/>
    <property type="project" value="InterPro"/>
</dbReference>
<dbReference type="GO" id="GO:0008270">
    <property type="term" value="F:zinc ion binding"/>
    <property type="evidence" value="ECO:0000250"/>
    <property type="project" value="UniProtKB"/>
</dbReference>
<dbReference type="GO" id="GO:0006935">
    <property type="term" value="P:chemotaxis"/>
    <property type="evidence" value="ECO:0007669"/>
    <property type="project" value="UniProtKB-KW"/>
</dbReference>
<dbReference type="GO" id="GO:0044849">
    <property type="term" value="P:estrous cycle"/>
    <property type="evidence" value="ECO:0000318"/>
    <property type="project" value="GO_Central"/>
</dbReference>
<dbReference type="GO" id="GO:0006955">
    <property type="term" value="P:immune response"/>
    <property type="evidence" value="ECO:0007669"/>
    <property type="project" value="InterPro"/>
</dbReference>
<dbReference type="GO" id="GO:0034638">
    <property type="term" value="P:phosphatidylcholine catabolic process"/>
    <property type="evidence" value="ECO:0000250"/>
    <property type="project" value="UniProtKB"/>
</dbReference>
<dbReference type="GO" id="GO:0009395">
    <property type="term" value="P:phospholipid catabolic process"/>
    <property type="evidence" value="ECO:0000250"/>
    <property type="project" value="UniProtKB"/>
</dbReference>
<dbReference type="GO" id="GO:0030149">
    <property type="term" value="P:sphingolipid catabolic process"/>
    <property type="evidence" value="ECO:0000250"/>
    <property type="project" value="UniProtKB"/>
</dbReference>
<dbReference type="CDD" id="cd16018">
    <property type="entry name" value="Enpp"/>
    <property type="match status" value="1"/>
</dbReference>
<dbReference type="CDD" id="cd00091">
    <property type="entry name" value="NUC"/>
    <property type="match status" value="1"/>
</dbReference>
<dbReference type="FunFam" id="3.40.570.10:FF:000001">
    <property type="entry name" value="Ectonucleotide pyrophosphatase/phosphodiesterase family member 2"/>
    <property type="match status" value="1"/>
</dbReference>
<dbReference type="FunFam" id="3.40.720.10:FF:000006">
    <property type="entry name" value="Ectonucleotide pyrophosphatase/phosphodiesterase family member 2"/>
    <property type="match status" value="1"/>
</dbReference>
<dbReference type="FunFam" id="4.10.410.20:FF:000001">
    <property type="entry name" value="Ectonucleotide pyrophosphatase/phosphodiesterase family member 2"/>
    <property type="match status" value="1"/>
</dbReference>
<dbReference type="FunFam" id="4.10.410.20:FF:000002">
    <property type="entry name" value="Ectonucleotide pyrophosphatase/phosphodiesterase family member 2"/>
    <property type="match status" value="1"/>
</dbReference>
<dbReference type="Gene3D" id="4.10.410.20">
    <property type="match status" value="2"/>
</dbReference>
<dbReference type="Gene3D" id="3.40.720.10">
    <property type="entry name" value="Alkaline Phosphatase, subunit A"/>
    <property type="match status" value="1"/>
</dbReference>
<dbReference type="Gene3D" id="3.40.570.10">
    <property type="entry name" value="Extracellular Endonuclease, subunit A"/>
    <property type="match status" value="1"/>
</dbReference>
<dbReference type="InterPro" id="IPR017850">
    <property type="entry name" value="Alkaline_phosphatase_core_sf"/>
</dbReference>
<dbReference type="InterPro" id="IPR044929">
    <property type="entry name" value="DNA/RNA_non-sp_Endonuclease_sf"/>
</dbReference>
<dbReference type="InterPro" id="IPR001604">
    <property type="entry name" value="Endo_G_ENPP1-like_dom"/>
</dbReference>
<dbReference type="InterPro" id="IPR020821">
    <property type="entry name" value="ENPP1-3/EXOG-like_nuc-like"/>
</dbReference>
<dbReference type="InterPro" id="IPR044925">
    <property type="entry name" value="His-Me_finger_sf"/>
</dbReference>
<dbReference type="InterPro" id="IPR002591">
    <property type="entry name" value="Phosphodiest/P_Trfase"/>
</dbReference>
<dbReference type="InterPro" id="IPR020436">
    <property type="entry name" value="SMB_chordata"/>
</dbReference>
<dbReference type="InterPro" id="IPR036024">
    <property type="entry name" value="Somatomedin_B-like_dom_sf"/>
</dbReference>
<dbReference type="InterPro" id="IPR001212">
    <property type="entry name" value="Somatomedin_B_dom"/>
</dbReference>
<dbReference type="PANTHER" id="PTHR10151">
    <property type="entry name" value="ECTONUCLEOTIDE PYROPHOSPHATASE/PHOSPHODIESTERASE"/>
    <property type="match status" value="1"/>
</dbReference>
<dbReference type="PANTHER" id="PTHR10151:SF21">
    <property type="entry name" value="ECTONUCLEOTIDE PYROPHOSPHATASE_PHOSPHODIESTERASE FAMILY MEMBER 2"/>
    <property type="match status" value="1"/>
</dbReference>
<dbReference type="Pfam" id="PF01223">
    <property type="entry name" value="Endonuclease_NS"/>
    <property type="match status" value="1"/>
</dbReference>
<dbReference type="Pfam" id="PF01663">
    <property type="entry name" value="Phosphodiest"/>
    <property type="match status" value="1"/>
</dbReference>
<dbReference type="Pfam" id="PF01033">
    <property type="entry name" value="Somatomedin_B"/>
    <property type="match status" value="2"/>
</dbReference>
<dbReference type="PRINTS" id="PR00022">
    <property type="entry name" value="SOMATOMEDINB"/>
</dbReference>
<dbReference type="SMART" id="SM00892">
    <property type="entry name" value="Endonuclease_NS"/>
    <property type="match status" value="1"/>
</dbReference>
<dbReference type="SMART" id="SM00477">
    <property type="entry name" value="NUC"/>
    <property type="match status" value="1"/>
</dbReference>
<dbReference type="SMART" id="SM00201">
    <property type="entry name" value="SO"/>
    <property type="match status" value="2"/>
</dbReference>
<dbReference type="SUPFAM" id="SSF53649">
    <property type="entry name" value="Alkaline phosphatase-like"/>
    <property type="match status" value="1"/>
</dbReference>
<dbReference type="SUPFAM" id="SSF54060">
    <property type="entry name" value="His-Me finger endonucleases"/>
    <property type="match status" value="1"/>
</dbReference>
<dbReference type="SUPFAM" id="SSF90188">
    <property type="entry name" value="Somatomedin B domain"/>
    <property type="match status" value="2"/>
</dbReference>
<dbReference type="PROSITE" id="PS00524">
    <property type="entry name" value="SMB_1"/>
    <property type="match status" value="2"/>
</dbReference>
<dbReference type="PROSITE" id="PS50958">
    <property type="entry name" value="SMB_2"/>
    <property type="match status" value="2"/>
</dbReference>
<gene>
    <name evidence="1" type="primary">ENPP2</name>
</gene>
<keyword id="KW-0106">Calcium</keyword>
<keyword id="KW-0145">Chemotaxis</keyword>
<keyword id="KW-0165">Cleavage on pair of basic residues</keyword>
<keyword id="KW-0903">Direct protein sequencing</keyword>
<keyword id="KW-1015">Disulfide bond</keyword>
<keyword id="KW-0325">Glycoprotein</keyword>
<keyword id="KW-0378">Hydrolase</keyword>
<keyword id="KW-0442">Lipid degradation</keyword>
<keyword id="KW-0443">Lipid metabolism</keyword>
<keyword id="KW-0479">Metal-binding</keyword>
<keyword id="KW-0550">Obesity</keyword>
<keyword id="KW-1185">Reference proteome</keyword>
<keyword id="KW-0677">Repeat</keyword>
<keyword id="KW-0964">Secreted</keyword>
<keyword id="KW-0732">Signal</keyword>
<keyword id="KW-0862">Zinc</keyword>
<accession>A1A4K5</accession>
<protein>
    <recommendedName>
        <fullName evidence="7">Autotaxin</fullName>
        <ecNumber evidence="6">3.1.4.39</ecNumber>
        <ecNumber evidence="1">3.1.4.4</ecNumber>
    </recommendedName>
    <alternativeName>
        <fullName evidence="1">Ectonucleotide pyrophosphatase/phosphodiesterase family member 2</fullName>
        <shortName>E-NPP 2</shortName>
    </alternativeName>
    <alternativeName>
        <fullName>Extracellular lysophospholipase D</fullName>
        <shortName evidence="7">LysoPLD</shortName>
    </alternativeName>
</protein>